<reference key="1">
    <citation type="journal article" date="1999" name="Eur. J. Biochem.">
        <title>Structure-function studies of omega-atracotoxin, a potent antagonist of insect voltage-gated calcium channels.</title>
        <authorList>
            <person name="Wang X.-H."/>
            <person name="Smith R."/>
            <person name="Fletcher J.I."/>
            <person name="Wilson H."/>
            <person name="Wood C.J."/>
            <person name="Merlin E.H."/>
            <person name="King G.F."/>
        </authorList>
    </citation>
    <scope>PROTEIN SEQUENCE</scope>
    <scope>SUBCELLULAR LOCATION</scope>
    <source>
        <tissue>Venom</tissue>
    </source>
</reference>
<keyword id="KW-0108">Calcium channel impairing toxin</keyword>
<keyword id="KW-0903">Direct protein sequencing</keyword>
<keyword id="KW-1015">Disulfide bond</keyword>
<keyword id="KW-0872">Ion channel impairing toxin</keyword>
<keyword id="KW-0960">Knottin</keyword>
<keyword id="KW-0528">Neurotoxin</keyword>
<keyword id="KW-0964">Secreted</keyword>
<keyword id="KW-0800">Toxin</keyword>
<keyword id="KW-1218">Voltage-gated calcium channel impairing toxin</keyword>
<sequence length="37" mass="4071">SPTCIPSGQPCPYNENCCSKSCTYKENENGNTVQRCD</sequence>
<dbReference type="SMR" id="P81597"/>
<dbReference type="ArachnoServer" id="AS000199">
    <property type="toxin name" value="omega-hexatoxin-Hv1d"/>
</dbReference>
<dbReference type="GO" id="GO:0005576">
    <property type="term" value="C:extracellular region"/>
    <property type="evidence" value="ECO:0007669"/>
    <property type="project" value="UniProtKB-SubCell"/>
</dbReference>
<dbReference type="GO" id="GO:0019855">
    <property type="term" value="F:calcium channel inhibitor activity"/>
    <property type="evidence" value="ECO:0007669"/>
    <property type="project" value="InterPro"/>
</dbReference>
<dbReference type="GO" id="GO:0090729">
    <property type="term" value="F:toxin activity"/>
    <property type="evidence" value="ECO:0007669"/>
    <property type="project" value="UniProtKB-KW"/>
</dbReference>
<dbReference type="GO" id="GO:0006952">
    <property type="term" value="P:defense response"/>
    <property type="evidence" value="ECO:0007669"/>
    <property type="project" value="InterPro"/>
</dbReference>
<dbReference type="InterPro" id="IPR009415">
    <property type="entry name" value="Omega-atracotox"/>
</dbReference>
<dbReference type="InterPro" id="IPR018071">
    <property type="entry name" value="Omega-atracotox_CS"/>
</dbReference>
<dbReference type="Pfam" id="PF06357">
    <property type="entry name" value="Omega-toxin"/>
    <property type="match status" value="1"/>
</dbReference>
<dbReference type="SUPFAM" id="SSF57059">
    <property type="entry name" value="omega toxin-like"/>
    <property type="match status" value="1"/>
</dbReference>
<dbReference type="PROSITE" id="PS60016">
    <property type="entry name" value="OMEGA_ACTX_1"/>
    <property type="match status" value="1"/>
</dbReference>
<evidence type="ECO:0000250" key="1">
    <source>
        <dbReference type="UniProtKB" id="P56207"/>
    </source>
</evidence>
<evidence type="ECO:0000269" key="2">
    <source>
    </source>
</evidence>
<evidence type="ECO:0000303" key="3">
    <source>
    </source>
</evidence>
<evidence type="ECO:0000305" key="4"/>
<evidence type="ECO:0000305" key="5">
    <source>
    </source>
</evidence>
<comment type="function">
    <text evidence="1">Inhibits insect, but not mammalian, voltage-gated calcium channels (Cav).</text>
</comment>
<comment type="subcellular location">
    <subcellularLocation>
        <location evidence="2">Secreted</location>
    </subcellularLocation>
</comment>
<comment type="tissue specificity">
    <text evidence="5">Expressed by the venom gland.</text>
</comment>
<comment type="domain">
    <text evidence="1">The presence of a 'disulfide through disulfide knot' structurally defines this protein as a knottin.</text>
</comment>
<comment type="similarity">
    <text evidence="4">Belongs to the neurotoxin 08 (Shiva) family. 01 (omega toxin) subfamily.</text>
</comment>
<name>TO1D_HADVE</name>
<feature type="peptide" id="PRO_0000044991" description="Omega-hexatoxin-Hv1d" evidence="2">
    <location>
        <begin position="1"/>
        <end position="37"/>
    </location>
</feature>
<feature type="site" description="Critical for insecticidal activity" evidence="1">
    <location>
        <position position="10"/>
    </location>
</feature>
<feature type="site" description="Critical for insecticidal activity" evidence="1">
    <location>
        <position position="27"/>
    </location>
</feature>
<feature type="site" description="Critical for insecticidal activity" evidence="1">
    <location>
        <position position="35"/>
    </location>
</feature>
<feature type="disulfide bond" evidence="1">
    <location>
        <begin position="4"/>
        <end position="18"/>
    </location>
</feature>
<feature type="disulfide bond" evidence="1">
    <location>
        <begin position="11"/>
        <end position="22"/>
    </location>
</feature>
<feature type="disulfide bond" evidence="1">
    <location>
        <begin position="17"/>
        <end position="36"/>
    </location>
</feature>
<organism>
    <name type="scientific">Hadronyche versuta</name>
    <name type="common">Blue mountains funnel-web spider</name>
    <name type="synonym">Atrax versutus</name>
    <dbReference type="NCBI Taxonomy" id="6904"/>
    <lineage>
        <taxon>Eukaryota</taxon>
        <taxon>Metazoa</taxon>
        <taxon>Ecdysozoa</taxon>
        <taxon>Arthropoda</taxon>
        <taxon>Chelicerata</taxon>
        <taxon>Arachnida</taxon>
        <taxon>Araneae</taxon>
        <taxon>Mygalomorphae</taxon>
        <taxon>Hexathelidae</taxon>
        <taxon>Hadronyche</taxon>
    </lineage>
</organism>
<protein>
    <recommendedName>
        <fullName evidence="4">Omega-hexatoxin-Hv1d</fullName>
        <shortName evidence="4">Omega-HXTX-Hv1d</shortName>
    </recommendedName>
    <alternativeName>
        <fullName evidence="3">Omega-atracotoxin-Hv1d</fullName>
        <shortName evidence="3">Omega-AcTx-Hv1d</shortName>
    </alternativeName>
</protein>
<accession>P81597</accession>
<proteinExistence type="evidence at protein level"/>